<organism>
    <name type="scientific">Neosartorya fischeri (strain ATCC 1020 / DSM 3700 / CBS 544.65 / FGSC A1164 / JCM 1740 / NRRL 181 / WB 181)</name>
    <name type="common">Aspergillus fischerianus</name>
    <dbReference type="NCBI Taxonomy" id="331117"/>
    <lineage>
        <taxon>Eukaryota</taxon>
        <taxon>Fungi</taxon>
        <taxon>Dikarya</taxon>
        <taxon>Ascomycota</taxon>
        <taxon>Pezizomycotina</taxon>
        <taxon>Eurotiomycetes</taxon>
        <taxon>Eurotiomycetidae</taxon>
        <taxon>Eurotiales</taxon>
        <taxon>Aspergillaceae</taxon>
        <taxon>Aspergillus</taxon>
        <taxon>Aspergillus subgen. Fumigati</taxon>
    </lineage>
</organism>
<dbReference type="EC" id="4.2.3.4" evidence="1"/>
<dbReference type="EC" id="2.5.1.19" evidence="1"/>
<dbReference type="EC" id="2.7.1.71" evidence="1"/>
<dbReference type="EC" id="4.2.1.10" evidence="1"/>
<dbReference type="EC" id="1.1.1.25" evidence="1"/>
<dbReference type="EMBL" id="DS027688">
    <property type="protein sequence ID" value="EAW22487.1"/>
    <property type="molecule type" value="Genomic_DNA"/>
</dbReference>
<dbReference type="RefSeq" id="XP_001264384.1">
    <property type="nucleotide sequence ID" value="XM_001264383.1"/>
</dbReference>
<dbReference type="SMR" id="A1D244"/>
<dbReference type="STRING" id="331117.A1D244"/>
<dbReference type="EnsemblFungi" id="EAW22487">
    <property type="protein sequence ID" value="EAW22487"/>
    <property type="gene ID" value="NFIA_011760"/>
</dbReference>
<dbReference type="GeneID" id="4591045"/>
<dbReference type="KEGG" id="nfi:NFIA_011760"/>
<dbReference type="VEuPathDB" id="FungiDB:NFIA_011760"/>
<dbReference type="eggNOG" id="KOG0692">
    <property type="taxonomic scope" value="Eukaryota"/>
</dbReference>
<dbReference type="HOGENOM" id="CLU_001201_1_2_1"/>
<dbReference type="OMA" id="SWANMSW"/>
<dbReference type="OrthoDB" id="197068at2759"/>
<dbReference type="UniPathway" id="UPA00053">
    <property type="reaction ID" value="UER00085"/>
</dbReference>
<dbReference type="UniPathway" id="UPA00053">
    <property type="reaction ID" value="UER00086"/>
</dbReference>
<dbReference type="UniPathway" id="UPA00053">
    <property type="reaction ID" value="UER00087"/>
</dbReference>
<dbReference type="UniPathway" id="UPA00053">
    <property type="reaction ID" value="UER00088"/>
</dbReference>
<dbReference type="UniPathway" id="UPA00053">
    <property type="reaction ID" value="UER00089"/>
</dbReference>
<dbReference type="Proteomes" id="UP000006702">
    <property type="component" value="Unassembled WGS sequence"/>
</dbReference>
<dbReference type="GO" id="GO:0005737">
    <property type="term" value="C:cytoplasm"/>
    <property type="evidence" value="ECO:0007669"/>
    <property type="project" value="UniProtKB-SubCell"/>
</dbReference>
<dbReference type="GO" id="GO:0003855">
    <property type="term" value="F:3-dehydroquinate dehydratase activity"/>
    <property type="evidence" value="ECO:0007669"/>
    <property type="project" value="UniProtKB-UniRule"/>
</dbReference>
<dbReference type="GO" id="GO:0003856">
    <property type="term" value="F:3-dehydroquinate synthase activity"/>
    <property type="evidence" value="ECO:0007669"/>
    <property type="project" value="UniProtKB-UniRule"/>
</dbReference>
<dbReference type="GO" id="GO:0003866">
    <property type="term" value="F:3-phosphoshikimate 1-carboxyvinyltransferase activity"/>
    <property type="evidence" value="ECO:0007669"/>
    <property type="project" value="UniProtKB-UniRule"/>
</dbReference>
<dbReference type="GO" id="GO:0005524">
    <property type="term" value="F:ATP binding"/>
    <property type="evidence" value="ECO:0007669"/>
    <property type="project" value="UniProtKB-UniRule"/>
</dbReference>
<dbReference type="GO" id="GO:0046872">
    <property type="term" value="F:metal ion binding"/>
    <property type="evidence" value="ECO:0007669"/>
    <property type="project" value="UniProtKB-UniRule"/>
</dbReference>
<dbReference type="GO" id="GO:0004764">
    <property type="term" value="F:shikimate 3-dehydrogenase (NADP+) activity"/>
    <property type="evidence" value="ECO:0007669"/>
    <property type="project" value="UniProtKB-UniRule"/>
</dbReference>
<dbReference type="GO" id="GO:0004765">
    <property type="term" value="F:shikimate kinase activity"/>
    <property type="evidence" value="ECO:0007669"/>
    <property type="project" value="UniProtKB-UniRule"/>
</dbReference>
<dbReference type="GO" id="GO:0008652">
    <property type="term" value="P:amino acid biosynthetic process"/>
    <property type="evidence" value="ECO:0007669"/>
    <property type="project" value="UniProtKB-KW"/>
</dbReference>
<dbReference type="GO" id="GO:0009073">
    <property type="term" value="P:aromatic amino acid family biosynthetic process"/>
    <property type="evidence" value="ECO:0007669"/>
    <property type="project" value="UniProtKB-UniRule"/>
</dbReference>
<dbReference type="GO" id="GO:0009423">
    <property type="term" value="P:chorismate biosynthetic process"/>
    <property type="evidence" value="ECO:0007669"/>
    <property type="project" value="UniProtKB-UniRule"/>
</dbReference>
<dbReference type="CDD" id="cd00502">
    <property type="entry name" value="DHQase_I"/>
    <property type="match status" value="1"/>
</dbReference>
<dbReference type="CDD" id="cd08195">
    <property type="entry name" value="DHQS"/>
    <property type="match status" value="1"/>
</dbReference>
<dbReference type="CDD" id="cd01556">
    <property type="entry name" value="EPSP_synthase"/>
    <property type="match status" value="1"/>
</dbReference>
<dbReference type="CDD" id="cd01065">
    <property type="entry name" value="NAD_bind_Shikimate_DH"/>
    <property type="match status" value="1"/>
</dbReference>
<dbReference type="CDD" id="cd00464">
    <property type="entry name" value="SK"/>
    <property type="match status" value="1"/>
</dbReference>
<dbReference type="FunFam" id="1.20.1090.10:FF:000007">
    <property type="entry name" value="Pentafunctional AROM polypeptide"/>
    <property type="match status" value="1"/>
</dbReference>
<dbReference type="FunFam" id="3.20.20.70:FF:000135">
    <property type="entry name" value="Pentafunctional AROM polypeptide"/>
    <property type="match status" value="1"/>
</dbReference>
<dbReference type="FunFam" id="3.40.50.10860:FF:000015">
    <property type="entry name" value="Pentafunctional AROM polypeptide"/>
    <property type="match status" value="1"/>
</dbReference>
<dbReference type="FunFam" id="3.40.50.1970:FF:000007">
    <property type="entry name" value="Pentafunctional AROM polypeptide"/>
    <property type="match status" value="1"/>
</dbReference>
<dbReference type="FunFam" id="3.40.50.300:FF:001256">
    <property type="entry name" value="Pentafunctional AROM polypeptide"/>
    <property type="match status" value="1"/>
</dbReference>
<dbReference type="FunFam" id="3.40.50.720:FF:000483">
    <property type="entry name" value="Pentafunctional AROM polypeptide"/>
    <property type="match status" value="1"/>
</dbReference>
<dbReference type="FunFam" id="3.65.10.10:FF:000007">
    <property type="entry name" value="Pentafunctional AROM polypeptide"/>
    <property type="match status" value="1"/>
</dbReference>
<dbReference type="FunFam" id="3.65.10.10:FF:000008">
    <property type="entry name" value="Pentafunctional AROM polypeptide"/>
    <property type="match status" value="1"/>
</dbReference>
<dbReference type="Gene3D" id="3.40.50.1970">
    <property type="match status" value="1"/>
</dbReference>
<dbReference type="Gene3D" id="3.20.20.70">
    <property type="entry name" value="Aldolase class I"/>
    <property type="match status" value="1"/>
</dbReference>
<dbReference type="Gene3D" id="1.20.1090.10">
    <property type="entry name" value="Dehydroquinate synthase-like - alpha domain"/>
    <property type="match status" value="1"/>
</dbReference>
<dbReference type="Gene3D" id="3.65.10.10">
    <property type="entry name" value="Enolpyruvate transferase domain"/>
    <property type="match status" value="2"/>
</dbReference>
<dbReference type="Gene3D" id="3.40.50.10860">
    <property type="entry name" value="Leucine Dehydrogenase, chain A, domain 1"/>
    <property type="match status" value="1"/>
</dbReference>
<dbReference type="Gene3D" id="3.40.50.720">
    <property type="entry name" value="NAD(P)-binding Rossmann-like Domain"/>
    <property type="match status" value="1"/>
</dbReference>
<dbReference type="Gene3D" id="3.40.50.300">
    <property type="entry name" value="P-loop containing nucleotide triphosphate hydrolases"/>
    <property type="match status" value="1"/>
</dbReference>
<dbReference type="HAMAP" id="MF_00210">
    <property type="entry name" value="EPSP_synth"/>
    <property type="match status" value="1"/>
</dbReference>
<dbReference type="HAMAP" id="MF_03143">
    <property type="entry name" value="Pentafunct_AroM"/>
    <property type="match status" value="1"/>
</dbReference>
<dbReference type="HAMAP" id="MF_00109">
    <property type="entry name" value="Shikimate_kinase"/>
    <property type="match status" value="1"/>
</dbReference>
<dbReference type="InterPro" id="IPR018508">
    <property type="entry name" value="3-dehydroquinate_DH_AS"/>
</dbReference>
<dbReference type="InterPro" id="IPR013785">
    <property type="entry name" value="Aldolase_TIM"/>
</dbReference>
<dbReference type="InterPro" id="IPR046346">
    <property type="entry name" value="Aminoacid_DH-like_N_sf"/>
</dbReference>
<dbReference type="InterPro" id="IPR016037">
    <property type="entry name" value="DHQ_synth_AroB"/>
</dbReference>
<dbReference type="InterPro" id="IPR030960">
    <property type="entry name" value="DHQS/DOIS_N"/>
</dbReference>
<dbReference type="InterPro" id="IPR056179">
    <property type="entry name" value="DHQS_C"/>
</dbReference>
<dbReference type="InterPro" id="IPR001381">
    <property type="entry name" value="DHquinase_I"/>
</dbReference>
<dbReference type="InterPro" id="IPR001986">
    <property type="entry name" value="Enolpyruvate_Tfrase_dom"/>
</dbReference>
<dbReference type="InterPro" id="IPR036968">
    <property type="entry name" value="Enolpyruvate_Tfrase_sf"/>
</dbReference>
<dbReference type="InterPro" id="IPR006264">
    <property type="entry name" value="EPSP_synthase"/>
</dbReference>
<dbReference type="InterPro" id="IPR023193">
    <property type="entry name" value="EPSP_synthase_CS"/>
</dbReference>
<dbReference type="InterPro" id="IPR036291">
    <property type="entry name" value="NAD(P)-bd_dom_sf"/>
</dbReference>
<dbReference type="InterPro" id="IPR027417">
    <property type="entry name" value="P-loop_NTPase"/>
</dbReference>
<dbReference type="InterPro" id="IPR008289">
    <property type="entry name" value="Pentafunct_AroM"/>
</dbReference>
<dbReference type="InterPro" id="IPR013792">
    <property type="entry name" value="RNA3'P_cycl/enolpyr_Trfase_a/b"/>
</dbReference>
<dbReference type="InterPro" id="IPR041121">
    <property type="entry name" value="SDH_C"/>
</dbReference>
<dbReference type="InterPro" id="IPR031322">
    <property type="entry name" value="Shikimate/glucono_kinase"/>
</dbReference>
<dbReference type="InterPro" id="IPR013708">
    <property type="entry name" value="Shikimate_DH-bd_N"/>
</dbReference>
<dbReference type="InterPro" id="IPR010110">
    <property type="entry name" value="Shikimate_DH_AroM-type"/>
</dbReference>
<dbReference type="InterPro" id="IPR000623">
    <property type="entry name" value="Shikimate_kinase/TSH1"/>
</dbReference>
<dbReference type="InterPro" id="IPR023000">
    <property type="entry name" value="Shikimate_kinase_CS"/>
</dbReference>
<dbReference type="NCBIfam" id="TIGR01356">
    <property type="entry name" value="aroA"/>
    <property type="match status" value="1"/>
</dbReference>
<dbReference type="NCBIfam" id="TIGR01357">
    <property type="entry name" value="aroB"/>
    <property type="match status" value="1"/>
</dbReference>
<dbReference type="NCBIfam" id="TIGR01093">
    <property type="entry name" value="aroD"/>
    <property type="match status" value="1"/>
</dbReference>
<dbReference type="NCBIfam" id="TIGR01809">
    <property type="entry name" value="Shik-DH-AROM"/>
    <property type="match status" value="1"/>
</dbReference>
<dbReference type="PANTHER" id="PTHR21090">
    <property type="entry name" value="AROM/DEHYDROQUINATE SYNTHASE"/>
    <property type="match status" value="1"/>
</dbReference>
<dbReference type="PANTHER" id="PTHR21090:SF5">
    <property type="entry name" value="PENTAFUNCTIONAL AROM POLYPEPTIDE"/>
    <property type="match status" value="1"/>
</dbReference>
<dbReference type="Pfam" id="PF01761">
    <property type="entry name" value="DHQ_synthase"/>
    <property type="match status" value="1"/>
</dbReference>
<dbReference type="Pfam" id="PF24621">
    <property type="entry name" value="DHQS_C"/>
    <property type="match status" value="1"/>
</dbReference>
<dbReference type="Pfam" id="PF01487">
    <property type="entry name" value="DHquinase_I"/>
    <property type="match status" value="1"/>
</dbReference>
<dbReference type="Pfam" id="PF00275">
    <property type="entry name" value="EPSP_synthase"/>
    <property type="match status" value="1"/>
</dbReference>
<dbReference type="Pfam" id="PF18317">
    <property type="entry name" value="SDH_C"/>
    <property type="match status" value="1"/>
</dbReference>
<dbReference type="Pfam" id="PF08501">
    <property type="entry name" value="Shikimate_dh_N"/>
    <property type="match status" value="1"/>
</dbReference>
<dbReference type="Pfam" id="PF01202">
    <property type="entry name" value="SKI"/>
    <property type="match status" value="1"/>
</dbReference>
<dbReference type="PIRSF" id="PIRSF000514">
    <property type="entry name" value="Pentafunct_AroM"/>
    <property type="match status" value="1"/>
</dbReference>
<dbReference type="PRINTS" id="PR01100">
    <property type="entry name" value="SHIKIMTKNASE"/>
</dbReference>
<dbReference type="SUPFAM" id="SSF51569">
    <property type="entry name" value="Aldolase"/>
    <property type="match status" value="1"/>
</dbReference>
<dbReference type="SUPFAM" id="SSF53223">
    <property type="entry name" value="Aminoacid dehydrogenase-like, N-terminal domain"/>
    <property type="match status" value="1"/>
</dbReference>
<dbReference type="SUPFAM" id="SSF56796">
    <property type="entry name" value="Dehydroquinate synthase-like"/>
    <property type="match status" value="1"/>
</dbReference>
<dbReference type="SUPFAM" id="SSF55205">
    <property type="entry name" value="EPT/RTPC-like"/>
    <property type="match status" value="1"/>
</dbReference>
<dbReference type="SUPFAM" id="SSF51735">
    <property type="entry name" value="NAD(P)-binding Rossmann-fold domains"/>
    <property type="match status" value="1"/>
</dbReference>
<dbReference type="SUPFAM" id="SSF52540">
    <property type="entry name" value="P-loop containing nucleoside triphosphate hydrolases"/>
    <property type="match status" value="1"/>
</dbReference>
<dbReference type="PROSITE" id="PS01028">
    <property type="entry name" value="DEHYDROQUINASE_I"/>
    <property type="match status" value="1"/>
</dbReference>
<dbReference type="PROSITE" id="PS00104">
    <property type="entry name" value="EPSP_SYNTHASE_1"/>
    <property type="match status" value="1"/>
</dbReference>
<dbReference type="PROSITE" id="PS00885">
    <property type="entry name" value="EPSP_SYNTHASE_2"/>
    <property type="match status" value="1"/>
</dbReference>
<dbReference type="PROSITE" id="PS01128">
    <property type="entry name" value="SHIKIMATE_KINASE"/>
    <property type="match status" value="1"/>
</dbReference>
<accession>A1D244</accession>
<reference key="1">
    <citation type="journal article" date="2008" name="PLoS Genet.">
        <title>Genomic islands in the pathogenic filamentous fungus Aspergillus fumigatus.</title>
        <authorList>
            <person name="Fedorova N.D."/>
            <person name="Khaldi N."/>
            <person name="Joardar V.S."/>
            <person name="Maiti R."/>
            <person name="Amedeo P."/>
            <person name="Anderson M.J."/>
            <person name="Crabtree J."/>
            <person name="Silva J.C."/>
            <person name="Badger J.H."/>
            <person name="Albarraq A."/>
            <person name="Angiuoli S."/>
            <person name="Bussey H."/>
            <person name="Bowyer P."/>
            <person name="Cotty P.J."/>
            <person name="Dyer P.S."/>
            <person name="Egan A."/>
            <person name="Galens K."/>
            <person name="Fraser-Liggett C.M."/>
            <person name="Haas B.J."/>
            <person name="Inman J.M."/>
            <person name="Kent R."/>
            <person name="Lemieux S."/>
            <person name="Malavazi I."/>
            <person name="Orvis J."/>
            <person name="Roemer T."/>
            <person name="Ronning C.M."/>
            <person name="Sundaram J.P."/>
            <person name="Sutton G."/>
            <person name="Turner G."/>
            <person name="Venter J.C."/>
            <person name="White O.R."/>
            <person name="Whitty B.R."/>
            <person name="Youngman P."/>
            <person name="Wolfe K.H."/>
            <person name="Goldman G.H."/>
            <person name="Wortman J.R."/>
            <person name="Jiang B."/>
            <person name="Denning D.W."/>
            <person name="Nierman W.C."/>
        </authorList>
    </citation>
    <scope>NUCLEOTIDE SEQUENCE [LARGE SCALE GENOMIC DNA]</scope>
    <source>
        <strain>ATCC 1020 / DSM 3700 / CBS 544.65 / FGSC A1164 / JCM 1740 / NRRL 181 / WB 181</strain>
    </source>
</reference>
<keyword id="KW-0028">Amino-acid biosynthesis</keyword>
<keyword id="KW-0057">Aromatic amino acid biosynthesis</keyword>
<keyword id="KW-0067">ATP-binding</keyword>
<keyword id="KW-0963">Cytoplasm</keyword>
<keyword id="KW-0418">Kinase</keyword>
<keyword id="KW-0456">Lyase</keyword>
<keyword id="KW-0479">Metal-binding</keyword>
<keyword id="KW-0511">Multifunctional enzyme</keyword>
<keyword id="KW-0521">NADP</keyword>
<keyword id="KW-0547">Nucleotide-binding</keyword>
<keyword id="KW-0560">Oxidoreductase</keyword>
<keyword id="KW-1185">Reference proteome</keyword>
<keyword id="KW-0808">Transferase</keyword>
<keyword id="KW-0862">Zinc</keyword>
<protein>
    <recommendedName>
        <fullName evidence="1">Pentafunctional AROM polypeptide</fullName>
    </recommendedName>
    <domain>
        <recommendedName>
            <fullName evidence="1">3-dehydroquinate synthase</fullName>
            <shortName evidence="1">DHQS</shortName>
            <ecNumber evidence="1">4.2.3.4</ecNumber>
        </recommendedName>
    </domain>
    <domain>
        <recommendedName>
            <fullName evidence="1">3-phosphoshikimate 1-carboxyvinyltransferase</fullName>
            <ecNumber evidence="1">2.5.1.19</ecNumber>
        </recommendedName>
        <alternativeName>
            <fullName evidence="1">5-enolpyruvylshikimate-3-phosphate synthase</fullName>
            <shortName evidence="1">EPSP synthase</shortName>
            <shortName evidence="1">EPSPS</shortName>
        </alternativeName>
    </domain>
    <domain>
        <recommendedName>
            <fullName evidence="1">Shikimate kinase</fullName>
            <shortName evidence="1">SK</shortName>
            <ecNumber evidence="1">2.7.1.71</ecNumber>
        </recommendedName>
    </domain>
    <domain>
        <recommendedName>
            <fullName evidence="1">3-dehydroquinate dehydratase</fullName>
            <shortName evidence="1">3-dehydroquinase</shortName>
            <ecNumber evidence="1">4.2.1.10</ecNumber>
        </recommendedName>
    </domain>
    <domain>
        <recommendedName>
            <fullName evidence="1">Shikimate dehydrogenase</fullName>
            <ecNumber evidence="1">1.1.1.25</ecNumber>
        </recommendedName>
    </domain>
</protein>
<feature type="chain" id="PRO_0000406726" description="Pentafunctional AROM polypeptide">
    <location>
        <begin position="1"/>
        <end position="1578"/>
    </location>
</feature>
<feature type="region of interest" description="3-dehydroquinate synthase">
    <location>
        <begin position="1"/>
        <end position="384"/>
    </location>
</feature>
<feature type="region of interest" description="EPSP synthase">
    <location>
        <begin position="397"/>
        <end position="842"/>
    </location>
</feature>
<feature type="region of interest" description="Shikimate kinase">
    <location>
        <begin position="864"/>
        <end position="1055"/>
    </location>
</feature>
<feature type="region of interest" description="3-dehydroquinase">
    <location>
        <begin position="1056"/>
        <end position="1276"/>
    </location>
</feature>
<feature type="region of interest" description="Shikimate dehydrogenase">
    <location>
        <begin position="1289"/>
        <end position="1578"/>
    </location>
</feature>
<feature type="active site" description="Proton acceptor; for 3-dehydroquinate synthase activity" evidence="1">
    <location>
        <position position="260"/>
    </location>
</feature>
<feature type="active site" description="Proton acceptor; for 3-dehydroquinate synthase activity" evidence="1">
    <location>
        <position position="275"/>
    </location>
</feature>
<feature type="active site" description="For EPSP synthase activity" evidence="1">
    <location>
        <position position="824"/>
    </location>
</feature>
<feature type="active site" description="Proton acceptor; for 3-dehydroquinate dehydratase activity" evidence="1">
    <location>
        <position position="1179"/>
    </location>
</feature>
<feature type="active site" description="Schiff-base intermediate with substrate; for 3-dehydroquinate dehydratase activity" evidence="1">
    <location>
        <position position="1207"/>
    </location>
</feature>
<feature type="binding site" evidence="1">
    <location>
        <begin position="44"/>
        <end position="46"/>
    </location>
    <ligand>
        <name>NAD(+)</name>
        <dbReference type="ChEBI" id="CHEBI:57540"/>
    </ligand>
</feature>
<feature type="binding site" evidence="1">
    <location>
        <begin position="81"/>
        <end position="84"/>
    </location>
    <ligand>
        <name>NAD(+)</name>
        <dbReference type="ChEBI" id="CHEBI:57540"/>
    </ligand>
</feature>
<feature type="binding site" evidence="1">
    <location>
        <begin position="114"/>
        <end position="116"/>
    </location>
    <ligand>
        <name>NAD(+)</name>
        <dbReference type="ChEBI" id="CHEBI:57540"/>
    </ligand>
</feature>
<feature type="binding site" evidence="1">
    <location>
        <position position="119"/>
    </location>
    <ligand>
        <name>NAD(+)</name>
        <dbReference type="ChEBI" id="CHEBI:57540"/>
    </ligand>
</feature>
<feature type="binding site" evidence="1">
    <location>
        <position position="130"/>
    </location>
    <ligand>
        <name>7-phospho-2-dehydro-3-deoxy-D-arabino-heptonate</name>
        <dbReference type="ChEBI" id="CHEBI:58394"/>
    </ligand>
</feature>
<feature type="binding site" evidence="1">
    <location>
        <begin position="139"/>
        <end position="140"/>
    </location>
    <ligand>
        <name>NAD(+)</name>
        <dbReference type="ChEBI" id="CHEBI:57540"/>
    </ligand>
</feature>
<feature type="binding site" evidence="1">
    <location>
        <position position="146"/>
    </location>
    <ligand>
        <name>7-phospho-2-dehydro-3-deoxy-D-arabino-heptonate</name>
        <dbReference type="ChEBI" id="CHEBI:58394"/>
    </ligand>
</feature>
<feature type="binding site" evidence="1">
    <location>
        <position position="152"/>
    </location>
    <ligand>
        <name>7-phospho-2-dehydro-3-deoxy-D-arabino-heptonate</name>
        <dbReference type="ChEBI" id="CHEBI:58394"/>
    </ligand>
</feature>
<feature type="binding site" evidence="1">
    <location>
        <position position="161"/>
    </location>
    <ligand>
        <name>NAD(+)</name>
        <dbReference type="ChEBI" id="CHEBI:57540"/>
    </ligand>
</feature>
<feature type="binding site" evidence="1">
    <location>
        <position position="162"/>
    </location>
    <ligand>
        <name>7-phospho-2-dehydro-3-deoxy-D-arabino-heptonate</name>
        <dbReference type="ChEBI" id="CHEBI:58394"/>
    </ligand>
</feature>
<feature type="binding site" evidence="1">
    <location>
        <begin position="179"/>
        <end position="182"/>
    </location>
    <ligand>
        <name>NAD(+)</name>
        <dbReference type="ChEBI" id="CHEBI:57540"/>
    </ligand>
</feature>
<feature type="binding site" evidence="1">
    <location>
        <position position="190"/>
    </location>
    <ligand>
        <name>NAD(+)</name>
        <dbReference type="ChEBI" id="CHEBI:57540"/>
    </ligand>
</feature>
<feature type="binding site" evidence="1">
    <location>
        <begin position="194"/>
        <end position="197"/>
    </location>
    <ligand>
        <name>7-phospho-2-dehydro-3-deoxy-D-arabino-heptonate</name>
        <dbReference type="ChEBI" id="CHEBI:58394"/>
    </ligand>
</feature>
<feature type="binding site" evidence="1">
    <location>
        <position position="194"/>
    </location>
    <ligand>
        <name>Zn(2+)</name>
        <dbReference type="ChEBI" id="CHEBI:29105"/>
        <note>catalytic</note>
    </ligand>
</feature>
<feature type="binding site" evidence="1">
    <location>
        <position position="250"/>
    </location>
    <ligand>
        <name>7-phospho-2-dehydro-3-deoxy-D-arabino-heptonate</name>
        <dbReference type="ChEBI" id="CHEBI:58394"/>
    </ligand>
</feature>
<feature type="binding site" evidence="1">
    <location>
        <begin position="264"/>
        <end position="268"/>
    </location>
    <ligand>
        <name>7-phospho-2-dehydro-3-deoxy-D-arabino-heptonate</name>
        <dbReference type="ChEBI" id="CHEBI:58394"/>
    </ligand>
</feature>
<feature type="binding site" evidence="1">
    <location>
        <position position="271"/>
    </location>
    <ligand>
        <name>7-phospho-2-dehydro-3-deoxy-D-arabino-heptonate</name>
        <dbReference type="ChEBI" id="CHEBI:58394"/>
    </ligand>
</feature>
<feature type="binding site" evidence="1">
    <location>
        <position position="271"/>
    </location>
    <ligand>
        <name>Zn(2+)</name>
        <dbReference type="ChEBI" id="CHEBI:29105"/>
        <note>catalytic</note>
    </ligand>
</feature>
<feature type="binding site" evidence="1">
    <location>
        <position position="287"/>
    </location>
    <ligand>
        <name>7-phospho-2-dehydro-3-deoxy-D-arabino-heptonate</name>
        <dbReference type="ChEBI" id="CHEBI:58394"/>
    </ligand>
</feature>
<feature type="binding site" evidence="1">
    <location>
        <position position="287"/>
    </location>
    <ligand>
        <name>Zn(2+)</name>
        <dbReference type="ChEBI" id="CHEBI:29105"/>
        <note>catalytic</note>
    </ligand>
</feature>
<feature type="binding site" evidence="1">
    <location>
        <position position="356"/>
    </location>
    <ligand>
        <name>7-phospho-2-dehydro-3-deoxy-D-arabino-heptonate</name>
        <dbReference type="ChEBI" id="CHEBI:58394"/>
    </ligand>
</feature>
<feature type="binding site" evidence="1">
    <location>
        <begin position="871"/>
        <end position="878"/>
    </location>
    <ligand>
        <name>ATP</name>
        <dbReference type="ChEBI" id="CHEBI:30616"/>
    </ligand>
</feature>
<comment type="function">
    <text evidence="1">The AROM polypeptide catalyzes 5 consecutive enzymatic reactions in prechorismate polyaromatic amino acid biosynthesis.</text>
</comment>
<comment type="catalytic activity">
    <reaction evidence="1">
        <text>7-phospho-2-dehydro-3-deoxy-D-arabino-heptonate = 3-dehydroquinate + phosphate</text>
        <dbReference type="Rhea" id="RHEA:21968"/>
        <dbReference type="ChEBI" id="CHEBI:32364"/>
        <dbReference type="ChEBI" id="CHEBI:43474"/>
        <dbReference type="ChEBI" id="CHEBI:58394"/>
        <dbReference type="EC" id="4.2.3.4"/>
    </reaction>
</comment>
<comment type="catalytic activity">
    <reaction evidence="1">
        <text>3-dehydroquinate = 3-dehydroshikimate + H2O</text>
        <dbReference type="Rhea" id="RHEA:21096"/>
        <dbReference type="ChEBI" id="CHEBI:15377"/>
        <dbReference type="ChEBI" id="CHEBI:16630"/>
        <dbReference type="ChEBI" id="CHEBI:32364"/>
        <dbReference type="EC" id="4.2.1.10"/>
    </reaction>
</comment>
<comment type="catalytic activity">
    <reaction evidence="1">
        <text>shikimate + NADP(+) = 3-dehydroshikimate + NADPH + H(+)</text>
        <dbReference type="Rhea" id="RHEA:17737"/>
        <dbReference type="ChEBI" id="CHEBI:15378"/>
        <dbReference type="ChEBI" id="CHEBI:16630"/>
        <dbReference type="ChEBI" id="CHEBI:36208"/>
        <dbReference type="ChEBI" id="CHEBI:57783"/>
        <dbReference type="ChEBI" id="CHEBI:58349"/>
        <dbReference type="EC" id="1.1.1.25"/>
    </reaction>
</comment>
<comment type="catalytic activity">
    <reaction evidence="1">
        <text>shikimate + ATP = 3-phosphoshikimate + ADP + H(+)</text>
        <dbReference type="Rhea" id="RHEA:13121"/>
        <dbReference type="ChEBI" id="CHEBI:15378"/>
        <dbReference type="ChEBI" id="CHEBI:30616"/>
        <dbReference type="ChEBI" id="CHEBI:36208"/>
        <dbReference type="ChEBI" id="CHEBI:145989"/>
        <dbReference type="ChEBI" id="CHEBI:456216"/>
        <dbReference type="EC" id="2.7.1.71"/>
    </reaction>
</comment>
<comment type="catalytic activity">
    <reaction evidence="1">
        <text>3-phosphoshikimate + phosphoenolpyruvate = 5-O-(1-carboxyvinyl)-3-phosphoshikimate + phosphate</text>
        <dbReference type="Rhea" id="RHEA:21256"/>
        <dbReference type="ChEBI" id="CHEBI:43474"/>
        <dbReference type="ChEBI" id="CHEBI:57701"/>
        <dbReference type="ChEBI" id="CHEBI:58702"/>
        <dbReference type="ChEBI" id="CHEBI:145989"/>
        <dbReference type="EC" id="2.5.1.19"/>
    </reaction>
</comment>
<comment type="cofactor">
    <cofactor>
        <name>Zn(2+)</name>
        <dbReference type="ChEBI" id="CHEBI:29105"/>
    </cofactor>
    <text>Binds 2 Zn(2+) ions per subunit.</text>
</comment>
<comment type="pathway">
    <text evidence="1">Metabolic intermediate biosynthesis; chorismate biosynthesis; chorismate from D-erythrose 4-phosphate and phosphoenolpyruvate: step 2/7.</text>
</comment>
<comment type="pathway">
    <text evidence="1">Metabolic intermediate biosynthesis; chorismate biosynthesis; chorismate from D-erythrose 4-phosphate and phosphoenolpyruvate: step 3/7.</text>
</comment>
<comment type="pathway">
    <text evidence="1">Metabolic intermediate biosynthesis; chorismate biosynthesis; chorismate from D-erythrose 4-phosphate and phosphoenolpyruvate: step 4/7.</text>
</comment>
<comment type="pathway">
    <text evidence="1">Metabolic intermediate biosynthesis; chorismate biosynthesis; chorismate from D-erythrose 4-phosphate and phosphoenolpyruvate: step 5/7.</text>
</comment>
<comment type="pathway">
    <text evidence="1">Metabolic intermediate biosynthesis; chorismate biosynthesis; chorismate from D-erythrose 4-phosphate and phosphoenolpyruvate: step 6/7.</text>
</comment>
<comment type="subunit">
    <text evidence="1">Homodimer.</text>
</comment>
<comment type="subcellular location">
    <subcellularLocation>
        <location evidence="1">Cytoplasm</location>
    </subcellularLocation>
</comment>
<comment type="similarity">
    <text evidence="1">In the N-terminal section; belongs to the sugar phosphate cyclases superfamily. Dehydroquinate synthase family.</text>
</comment>
<comment type="similarity">
    <text evidence="1">In the 2nd section; belongs to the EPSP synthase family.</text>
</comment>
<comment type="similarity">
    <text evidence="1">In the 3rd section; belongs to the shikimate kinase family.</text>
</comment>
<comment type="similarity">
    <text evidence="1">In the 4th section; belongs to the type-I 3-dehydroquinase family.</text>
</comment>
<comment type="similarity">
    <text evidence="1">In the C-terminal section; belongs to the shikimate dehydrogenase family.</text>
</comment>
<name>ARO1_NEOFI</name>
<proteinExistence type="inferred from homology"/>
<sequence>MTGPTKISILGQESIVADFGLWRNYVAKDLISGCPSTTYVLITDTNIGSIYTPGFQKSFEEAAASVSPSPRLLIYNAPPGEVSKSRQTKADIEDWMLSQSPPCGRDTVVIALGGGVIGDLTGFVAATYMRGVRFVQVPTTLLAMVDSSIGGKTAIDTPLGKNLIGAIWQPSRIYIDLEFLETLPVREFINGMAEVIKTAAISSEEEFTALEDNAETILSAVRREVKPGQRRFEGIEEILKARILASARHKAFVVSADEREGGLRNLLNWGHSIGHAIEAILTPQILHGECVAIGMVKEAELARHLGILKGVAVARIVKCIAAYGLPTSLKDSRIRKLTAGKHCSVDQILFNMALDKKNDGPKKKIVLLSAIGRTYEPRASVVPNEDIGVVLAPSIEVYPGVSPASEVVCAPPGSKSISNRALVLAALGSGTVRIKNLLHSDDTEVMLNALERLGAATFSWEEEGEVLVVNGKGGALQAHPSPLYLGNAGTASRFLTTVATLATASSVDSSVLTGNNRMKQRPIGDLVDALTANGAQIEYVENKGSLPLKIAASGGFTGGQINLAAKVSSQYVSSLLMCAPYAKEPVTLKLVGGKPISQPYIDMTTAMMRSFGIDVKKSTTEEHTYHIPQGRYINPAEYVVESDASSATYPLAIAAVTGTTCTIPNIGSKSLQGDARFAVDVLRPMGCTVEQTDTSTTVTGPADGVLRPLPNVDMEPMTDAFLGASVLAAIARGKDSNHTTRIYGIANQRVKECNRIKAMHDELAKFGVVCREHDDGLEIDGIDRSTLRQPAGGVFCYDDHRVAFSFSVLSLVAPKPTLILEKECVGKTWPGWWDTLRQKFAVKLEGKELKEAESPVLTRAEKASASVFIIGMRGAGKTTSGNWVASTLKRPFIDLDDELERIEGMTIPDIIKQRGWQGFRDAELSLLQRTMKERPTGHVFACGGGVVEIPEARKLLIDWHKTKGNVLLIMRDIKQVMAFLNIDKTRPAYVEDMLGVWLRRKPWFQECSNIQYYSQHASAGLPRASEDFARFIKFVTGLEDSLSTIKKKQHSFFVSLTLPDVRGADQILEQACVGSDAVELRVDLLEDPDSANGIPTVDFVADQISYLRSRITLPVIFTIRTKGQGGRFPDDAHAEAMQLYRLAVRSGCEFVDLEIAFPDEMLRAVTEMKGYSKIITSHHDPKGELSWANMSWMKYYNRALEYGDVIKLVGVARNLDDNTALRKFKNWAEEAHDVPLIAINMGGNGQLSRILNGFMTPVSHPALPFRAAPGQLSATDIRKGLSLMGEIKKKRFALFGSPISESRSPALHNTLFAEMGLPHEYTRLETANVEDVKDFIRAPDFGGASVTIPLKLDIMPLLDEITAEAEIIGAVNTVVPVSDGEGKPQRLVGHNTDWQGMVQCLRNAGAYGADGNASGLVVGGGGTSRAAIYALHHMGFSPIYIVGRNPAKLESMVATFPTGYNIRIVEGNEKLEHVPHVAIGTIPADRPIDPGMREILCHMFERAQEADADAARTIEGSPRVLLEMAYKPRVTALMQLAVDAGWTTVPGLEALIGQGVHQFQHWTGIRPLYERARAIVLG</sequence>
<evidence type="ECO:0000255" key="1">
    <source>
        <dbReference type="HAMAP-Rule" id="MF_03143"/>
    </source>
</evidence>
<gene>
    <name evidence="1" type="primary">aroM</name>
    <name type="ORF">NFIA_011760</name>
</gene>